<name>HBB_HIPAM</name>
<accession>P19016</accession>
<feature type="chain" id="PRO_0000052973" description="Hemoglobin subunit beta">
    <location>
        <begin position="1"/>
        <end position="146"/>
    </location>
</feature>
<feature type="domain" description="Globin" evidence="3">
    <location>
        <begin position="2"/>
        <end position="146"/>
    </location>
</feature>
<feature type="binding site" description="distal binding residue">
    <location>
        <position position="63"/>
    </location>
    <ligand>
        <name>heme b</name>
        <dbReference type="ChEBI" id="CHEBI:60344"/>
    </ligand>
    <ligandPart>
        <name>Fe</name>
        <dbReference type="ChEBI" id="CHEBI:18248"/>
    </ligandPart>
</feature>
<feature type="binding site" description="proximal binding residue">
    <location>
        <position position="92"/>
    </location>
    <ligand>
        <name>heme b</name>
        <dbReference type="ChEBI" id="CHEBI:60344"/>
    </ligand>
    <ligandPart>
        <name>Fe</name>
        <dbReference type="ChEBI" id="CHEBI:18248"/>
    </ligandPart>
</feature>
<feature type="modified residue" description="N-acetylvaline" evidence="1">
    <location>
        <position position="1"/>
    </location>
</feature>
<feature type="modified residue" description="Phosphoserine" evidence="2">
    <location>
        <position position="44"/>
    </location>
</feature>
<feature type="modified residue" description="N6-acetyllysine" evidence="2">
    <location>
        <position position="59"/>
    </location>
</feature>
<feature type="modified residue" description="N6-acetyllysine" evidence="2">
    <location>
        <position position="82"/>
    </location>
</feature>
<feature type="modified residue" description="S-nitrosocysteine" evidence="2">
    <location>
        <position position="93"/>
    </location>
</feature>
<proteinExistence type="evidence at protein level"/>
<sequence length="146" mass="16065">VHLTAEEKDAVLGLWGKVNVQEVGGEALGRLLVVYPWTQRFFESFGDLSSADAVMNNPKVKAHGKKVLDSFADGLKHLDNLKGTFAALSELHCDQLHVDPENFRLLGNELVVVLARTFGKEFTPELQAAYQKVVAGVANALAHRYH</sequence>
<protein>
    <recommendedName>
        <fullName>Hemoglobin subunit beta</fullName>
    </recommendedName>
    <alternativeName>
        <fullName>Beta-globin</fullName>
    </alternativeName>
    <alternativeName>
        <fullName>Hemoglobin beta chain</fullName>
    </alternativeName>
</protein>
<dbReference type="SMR" id="P19016"/>
<dbReference type="GO" id="GO:0072562">
    <property type="term" value="C:blood microparticle"/>
    <property type="evidence" value="ECO:0007669"/>
    <property type="project" value="TreeGrafter"/>
</dbReference>
<dbReference type="GO" id="GO:0031838">
    <property type="term" value="C:haptoglobin-hemoglobin complex"/>
    <property type="evidence" value="ECO:0007669"/>
    <property type="project" value="TreeGrafter"/>
</dbReference>
<dbReference type="GO" id="GO:0005833">
    <property type="term" value="C:hemoglobin complex"/>
    <property type="evidence" value="ECO:0007669"/>
    <property type="project" value="InterPro"/>
</dbReference>
<dbReference type="GO" id="GO:0031720">
    <property type="term" value="F:haptoglobin binding"/>
    <property type="evidence" value="ECO:0007669"/>
    <property type="project" value="TreeGrafter"/>
</dbReference>
<dbReference type="GO" id="GO:0020037">
    <property type="term" value="F:heme binding"/>
    <property type="evidence" value="ECO:0007669"/>
    <property type="project" value="InterPro"/>
</dbReference>
<dbReference type="GO" id="GO:0031721">
    <property type="term" value="F:hemoglobin alpha binding"/>
    <property type="evidence" value="ECO:0007669"/>
    <property type="project" value="TreeGrafter"/>
</dbReference>
<dbReference type="GO" id="GO:0046872">
    <property type="term" value="F:metal ion binding"/>
    <property type="evidence" value="ECO:0007669"/>
    <property type="project" value="UniProtKB-KW"/>
</dbReference>
<dbReference type="GO" id="GO:0043177">
    <property type="term" value="F:organic acid binding"/>
    <property type="evidence" value="ECO:0007669"/>
    <property type="project" value="TreeGrafter"/>
</dbReference>
<dbReference type="GO" id="GO:0019825">
    <property type="term" value="F:oxygen binding"/>
    <property type="evidence" value="ECO:0007669"/>
    <property type="project" value="InterPro"/>
</dbReference>
<dbReference type="GO" id="GO:0005344">
    <property type="term" value="F:oxygen carrier activity"/>
    <property type="evidence" value="ECO:0007669"/>
    <property type="project" value="UniProtKB-KW"/>
</dbReference>
<dbReference type="GO" id="GO:0004601">
    <property type="term" value="F:peroxidase activity"/>
    <property type="evidence" value="ECO:0007669"/>
    <property type="project" value="TreeGrafter"/>
</dbReference>
<dbReference type="GO" id="GO:0042744">
    <property type="term" value="P:hydrogen peroxide catabolic process"/>
    <property type="evidence" value="ECO:0007669"/>
    <property type="project" value="TreeGrafter"/>
</dbReference>
<dbReference type="CDD" id="cd08925">
    <property type="entry name" value="Hb-beta-like"/>
    <property type="match status" value="1"/>
</dbReference>
<dbReference type="FunFam" id="1.10.490.10:FF:000001">
    <property type="entry name" value="Hemoglobin subunit beta"/>
    <property type="match status" value="1"/>
</dbReference>
<dbReference type="Gene3D" id="1.10.490.10">
    <property type="entry name" value="Globins"/>
    <property type="match status" value="1"/>
</dbReference>
<dbReference type="InterPro" id="IPR000971">
    <property type="entry name" value="Globin"/>
</dbReference>
<dbReference type="InterPro" id="IPR009050">
    <property type="entry name" value="Globin-like_sf"/>
</dbReference>
<dbReference type="InterPro" id="IPR012292">
    <property type="entry name" value="Globin/Proto"/>
</dbReference>
<dbReference type="InterPro" id="IPR002337">
    <property type="entry name" value="Hemoglobin_b"/>
</dbReference>
<dbReference type="InterPro" id="IPR050056">
    <property type="entry name" value="Hemoglobin_oxygen_transport"/>
</dbReference>
<dbReference type="PANTHER" id="PTHR11442">
    <property type="entry name" value="HEMOGLOBIN FAMILY MEMBER"/>
    <property type="match status" value="1"/>
</dbReference>
<dbReference type="PANTHER" id="PTHR11442:SF42">
    <property type="entry name" value="HEMOGLOBIN SUBUNIT BETA"/>
    <property type="match status" value="1"/>
</dbReference>
<dbReference type="Pfam" id="PF00042">
    <property type="entry name" value="Globin"/>
    <property type="match status" value="1"/>
</dbReference>
<dbReference type="PRINTS" id="PR00814">
    <property type="entry name" value="BETAHAEM"/>
</dbReference>
<dbReference type="SUPFAM" id="SSF46458">
    <property type="entry name" value="Globin-like"/>
    <property type="match status" value="1"/>
</dbReference>
<dbReference type="PROSITE" id="PS01033">
    <property type="entry name" value="GLOBIN"/>
    <property type="match status" value="1"/>
</dbReference>
<evidence type="ECO:0000250" key="1">
    <source>
        <dbReference type="UniProtKB" id="P02086"/>
    </source>
</evidence>
<evidence type="ECO:0000250" key="2">
    <source>
        <dbReference type="UniProtKB" id="P68871"/>
    </source>
</evidence>
<evidence type="ECO:0000255" key="3">
    <source>
        <dbReference type="PROSITE-ProRule" id="PRU00238"/>
    </source>
</evidence>
<gene>
    <name type="primary">HBB</name>
</gene>
<keyword id="KW-0007">Acetylation</keyword>
<keyword id="KW-0903">Direct protein sequencing</keyword>
<keyword id="KW-0349">Heme</keyword>
<keyword id="KW-0408">Iron</keyword>
<keyword id="KW-0479">Metal-binding</keyword>
<keyword id="KW-0561">Oxygen transport</keyword>
<keyword id="KW-0597">Phosphoprotein</keyword>
<keyword id="KW-0702">S-nitrosylation</keyword>
<keyword id="KW-0813">Transport</keyword>
<organism>
    <name type="scientific">Hippopotamus amphibius</name>
    <name type="common">Hippopotamus</name>
    <dbReference type="NCBI Taxonomy" id="9833"/>
    <lineage>
        <taxon>Eukaryota</taxon>
        <taxon>Metazoa</taxon>
        <taxon>Chordata</taxon>
        <taxon>Craniata</taxon>
        <taxon>Vertebrata</taxon>
        <taxon>Euteleostomi</taxon>
        <taxon>Mammalia</taxon>
        <taxon>Eutheria</taxon>
        <taxon>Laurasiatheria</taxon>
        <taxon>Artiodactyla</taxon>
        <taxon>Whippomorpha</taxon>
        <taxon>Ancodonta</taxon>
        <taxon>Hippopotamidae</taxon>
        <taxon>Hippopotamus</taxon>
    </lineage>
</organism>
<reference key="1">
    <citation type="journal article" date="1983" name="S. Afr. J. Sci.">
        <title>Amino acid sequence of haemoglobin of hippopotamus (Hippopotamus amphibius, Artiodactyla).</title>
        <authorList>
            <person name="Braunitzer G."/>
            <person name="Wright P.G."/>
            <person name="Stangl A."/>
            <person name="Schrank B."/>
            <person name="Krombach C."/>
        </authorList>
    </citation>
    <scope>PROTEIN SEQUENCE</scope>
</reference>
<comment type="function">
    <text>Involved in oxygen transport from the lung to the various peripheral tissues.</text>
</comment>
<comment type="subunit">
    <text>Heterotetramer of two alpha chains and two beta chains.</text>
</comment>
<comment type="tissue specificity">
    <text>Red blood cells.</text>
</comment>
<comment type="similarity">
    <text evidence="3">Belongs to the globin family.</text>
</comment>